<dbReference type="EC" id="4.2.1.130" evidence="2"/>
<dbReference type="EMBL" id="FO080906">
    <property type="protein sequence ID" value="CCD67692.1"/>
    <property type="molecule type" value="Genomic_DNA"/>
</dbReference>
<dbReference type="PIR" id="T03871">
    <property type="entry name" value="T03871"/>
</dbReference>
<dbReference type="RefSeq" id="NP_504132.1">
    <property type="nucleotide sequence ID" value="NM_071731.2"/>
</dbReference>
<dbReference type="SMR" id="O16228"/>
<dbReference type="FunCoup" id="O16228">
    <property type="interactions" value="1108"/>
</dbReference>
<dbReference type="STRING" id="6239.C49G7.11.1"/>
<dbReference type="PaxDb" id="6239-C49G7.11"/>
<dbReference type="PeptideAtlas" id="O16228"/>
<dbReference type="EnsemblMetazoa" id="C49G7.11.1">
    <property type="protein sequence ID" value="C49G7.11.1"/>
    <property type="gene ID" value="WBGene00016789"/>
</dbReference>
<dbReference type="GeneID" id="183625"/>
<dbReference type="KEGG" id="cel:CELE_C49G7.11"/>
<dbReference type="UCSC" id="C49G7.11">
    <property type="organism name" value="c. elegans"/>
</dbReference>
<dbReference type="AGR" id="WB:WBGene00016789"/>
<dbReference type="CTD" id="183625"/>
<dbReference type="WormBase" id="C49G7.11">
    <property type="protein sequence ID" value="CE08869"/>
    <property type="gene ID" value="WBGene00016789"/>
    <property type="gene designation" value="djr-1.2"/>
</dbReference>
<dbReference type="eggNOG" id="KOG2764">
    <property type="taxonomic scope" value="Eukaryota"/>
</dbReference>
<dbReference type="GeneTree" id="ENSGT00390000001231"/>
<dbReference type="HOGENOM" id="CLU_000445_44_2_1"/>
<dbReference type="InParanoid" id="O16228"/>
<dbReference type="OMA" id="CGHEKAQ"/>
<dbReference type="OrthoDB" id="543156at2759"/>
<dbReference type="PhylomeDB" id="O16228"/>
<dbReference type="PRO" id="PR:O16228"/>
<dbReference type="Proteomes" id="UP000001940">
    <property type="component" value="Chromosome V"/>
</dbReference>
<dbReference type="Bgee" id="WBGene00016789">
    <property type="expression patterns" value="Expressed in larva and 1 other cell type or tissue"/>
</dbReference>
<dbReference type="GO" id="GO:0005737">
    <property type="term" value="C:cytoplasm"/>
    <property type="evidence" value="ECO:0000314"/>
    <property type="project" value="WormBase"/>
</dbReference>
<dbReference type="GO" id="GO:0005739">
    <property type="term" value="C:mitochondrion"/>
    <property type="evidence" value="ECO:0000318"/>
    <property type="project" value="GO_Central"/>
</dbReference>
<dbReference type="GO" id="GO:0005634">
    <property type="term" value="C:nucleus"/>
    <property type="evidence" value="ECO:0000318"/>
    <property type="project" value="GO_Central"/>
</dbReference>
<dbReference type="GO" id="GO:0019172">
    <property type="term" value="F:glyoxalase III activity"/>
    <property type="evidence" value="ECO:0007669"/>
    <property type="project" value="UniProtKB-EC"/>
</dbReference>
<dbReference type="GO" id="GO:0036471">
    <property type="term" value="P:cellular response to glyoxal"/>
    <property type="evidence" value="ECO:0000314"/>
    <property type="project" value="ParkinsonsUK-UCL"/>
</dbReference>
<dbReference type="GO" id="GO:0097238">
    <property type="term" value="P:cellular response to methylglyoxal"/>
    <property type="evidence" value="ECO:0000314"/>
    <property type="project" value="ParkinsonsUK-UCL"/>
</dbReference>
<dbReference type="GO" id="GO:0046295">
    <property type="term" value="P:glycolate biosynthetic process"/>
    <property type="evidence" value="ECO:0000314"/>
    <property type="project" value="ParkinsonsUK-UCL"/>
</dbReference>
<dbReference type="GO" id="GO:1903189">
    <property type="term" value="P:glyoxal metabolic process"/>
    <property type="evidence" value="ECO:0000314"/>
    <property type="project" value="ParkinsonsUK-UCL"/>
</dbReference>
<dbReference type="GO" id="GO:0019249">
    <property type="term" value="P:lactate biosynthetic process"/>
    <property type="evidence" value="ECO:0000314"/>
    <property type="project" value="ParkinsonsUK-UCL"/>
</dbReference>
<dbReference type="GO" id="GO:0009438">
    <property type="term" value="P:methylglyoxal metabolic process"/>
    <property type="evidence" value="ECO:0000314"/>
    <property type="project" value="ParkinsonsUK-UCL"/>
</dbReference>
<dbReference type="GO" id="GO:1902176">
    <property type="term" value="P:negative regulation of oxidative stress-induced intrinsic apoptotic signaling pathway"/>
    <property type="evidence" value="ECO:0000316"/>
    <property type="project" value="ParkinsonsUK-UCL"/>
</dbReference>
<dbReference type="GO" id="GO:0006979">
    <property type="term" value="P:response to oxidative stress"/>
    <property type="evidence" value="ECO:0000318"/>
    <property type="project" value="GO_Central"/>
</dbReference>
<dbReference type="CDD" id="cd03135">
    <property type="entry name" value="GATase1_DJ-1"/>
    <property type="match status" value="1"/>
</dbReference>
<dbReference type="FunFam" id="3.40.50.880:FF:000022">
    <property type="entry name" value="protein deglycase DJ-1"/>
    <property type="match status" value="1"/>
</dbReference>
<dbReference type="Gene3D" id="3.40.50.880">
    <property type="match status" value="1"/>
</dbReference>
<dbReference type="InterPro" id="IPR029062">
    <property type="entry name" value="Class_I_gatase-like"/>
</dbReference>
<dbReference type="InterPro" id="IPR006287">
    <property type="entry name" value="DJ-1"/>
</dbReference>
<dbReference type="InterPro" id="IPR002818">
    <property type="entry name" value="DJ-1/PfpI"/>
</dbReference>
<dbReference type="InterPro" id="IPR050325">
    <property type="entry name" value="Prot/Nucl_acid_deglycase"/>
</dbReference>
<dbReference type="NCBIfam" id="TIGR01383">
    <property type="entry name" value="not_thiJ"/>
    <property type="match status" value="1"/>
</dbReference>
<dbReference type="PANTHER" id="PTHR48094:SF3">
    <property type="entry name" value="GLUTATHIONE-INDEPENDENT GLYOXALASE DJR-1.2"/>
    <property type="match status" value="1"/>
</dbReference>
<dbReference type="PANTHER" id="PTHR48094">
    <property type="entry name" value="PROTEIN/NUCLEIC ACID DEGLYCASE DJ-1-RELATED"/>
    <property type="match status" value="1"/>
</dbReference>
<dbReference type="Pfam" id="PF01965">
    <property type="entry name" value="DJ-1_PfpI"/>
    <property type="match status" value="1"/>
</dbReference>
<dbReference type="SUPFAM" id="SSF52317">
    <property type="entry name" value="Class I glutamine amidotransferase-like"/>
    <property type="match status" value="1"/>
</dbReference>
<comment type="function">
    <text evidence="2 3">Catalyzes the conversion of methylglyoxal (MG) or glyoxal (GO) to D-lactate or glycolic acid respectively in a single glutathione (GSH)-independent step. May play a role in detoxifying endogenously produced glyoxals. Involved in protection against glyoxal-induced cell death. Protects dopaminergic neurons from glyoxal-dependent neuronal degeneration.</text>
</comment>
<comment type="catalytic activity">
    <reaction evidence="2">
        <text>methylglyoxal + H2O = (R)-lactate + H(+)</text>
        <dbReference type="Rhea" id="RHEA:27754"/>
        <dbReference type="ChEBI" id="CHEBI:15377"/>
        <dbReference type="ChEBI" id="CHEBI:15378"/>
        <dbReference type="ChEBI" id="CHEBI:16004"/>
        <dbReference type="ChEBI" id="CHEBI:17158"/>
        <dbReference type="EC" id="4.2.1.130"/>
    </reaction>
</comment>
<comment type="biophysicochemical properties">
    <kinetics>
        <KM evidence="2">0.39 mM for methylglyoxal</KM>
        <KM evidence="2">0.78 mM for glyoxal</KM>
        <text evidence="2">kcat is 60.0 min(-1) with methylglyoxal as substrate and 146.4 min(-1) with glyoxal as substrate.</text>
    </kinetics>
</comment>
<comment type="subcellular location">
    <subcellularLocation>
        <location evidence="2">Cytoplasm</location>
    </subcellularLocation>
</comment>
<comment type="tissue specificity">
    <text evidence="2">Expressed in various tissues, including pharyngeal muscles, pharynx-intestinal valve, ventral nerve cord, spermatheca, rectal gland, inner labial (IL) cells of head neurons, phasmid (PHA/PHB) neurons in tail and supporting sheath/socket cells, as well as in head mesodermal cells (HMC), excretory canals and coelomocytes.</text>
</comment>
<comment type="induction">
    <text evidence="3">Induced by DAF-16 during starvation as well as in the dauer stage.</text>
</comment>
<comment type="similarity">
    <text evidence="5">Belongs to the peptidase C56 family. DJ-1 subfamily.</text>
</comment>
<organism>
    <name type="scientific">Caenorhabditis elegans</name>
    <dbReference type="NCBI Taxonomy" id="6239"/>
    <lineage>
        <taxon>Eukaryota</taxon>
        <taxon>Metazoa</taxon>
        <taxon>Ecdysozoa</taxon>
        <taxon>Nematoda</taxon>
        <taxon>Chromadorea</taxon>
        <taxon>Rhabditida</taxon>
        <taxon>Rhabditina</taxon>
        <taxon>Rhabditomorpha</taxon>
        <taxon>Rhabditoidea</taxon>
        <taxon>Rhabditidae</taxon>
        <taxon>Peloderinae</taxon>
        <taxon>Caenorhabditis</taxon>
    </lineage>
</organism>
<gene>
    <name evidence="6" type="primary">djr-1.2</name>
    <name type="ORF">C49G7.11</name>
</gene>
<reference key="1">
    <citation type="journal article" date="1998" name="Science">
        <title>Genome sequence of the nematode C. elegans: a platform for investigating biology.</title>
        <authorList>
            <consortium name="The C. elegans sequencing consortium"/>
        </authorList>
    </citation>
    <scope>NUCLEOTIDE SEQUENCE [LARGE SCALE GENOMIC DNA]</scope>
    <source>
        <strain>Bristol N2</strain>
    </source>
</reference>
<reference key="2">
    <citation type="journal article" date="2012" name="Hum. Mol. Genet.">
        <title>Human DJ-1 and its homologs are novel glyoxalases.</title>
        <authorList>
            <person name="Lee J.Y."/>
            <person name="Song J."/>
            <person name="Kwon K."/>
            <person name="Jang S."/>
            <person name="Kim C."/>
            <person name="Baek K."/>
            <person name="Kim J."/>
            <person name="Park C."/>
        </authorList>
    </citation>
    <scope>FUNCTION</scope>
    <scope>CATALYTIC ACTIVITY</scope>
    <scope>BIOPHYSICOCHEMICAL PROPERTIES</scope>
    <scope>SUBCELLULAR LOCATION</scope>
    <scope>TISSUE SPECIFICITY</scope>
</reference>
<reference key="3">
    <citation type="journal article" date="2013" name="Gene">
        <title>DJR-1.2 of Caenorhabditis elegans is induced by DAF-16 in the dauer state.</title>
        <authorList>
            <person name="Lee J.Y."/>
            <person name="Kim C."/>
            <person name="Kim J."/>
            <person name="Park C."/>
        </authorList>
    </citation>
    <scope>INDUCTION</scope>
</reference>
<sequence>MAAQKSALILLPPEDAEEIEVIVTGDVLVRGGLQVLYAGSSTEPVKCAKGARIVPDVALKDVKNKTFDIIIIPGGPGCSKLAECPVIGELLKTQVKSGGLIGAICAGPTVLLAHGIVAERVTCHYTVKDKMTEGGYKYLDDNVVISDRVITSKGPGTAFEFALKIVETLEGPEKTNSLLKPLCLAK</sequence>
<evidence type="ECO:0000250" key="1">
    <source>
        <dbReference type="UniProtKB" id="Q10356"/>
    </source>
</evidence>
<evidence type="ECO:0000269" key="2">
    <source>
    </source>
</evidence>
<evidence type="ECO:0000269" key="3">
    <source>
    </source>
</evidence>
<evidence type="ECO:0000303" key="4">
    <source>
    </source>
</evidence>
<evidence type="ECO:0000305" key="5"/>
<evidence type="ECO:0000312" key="6">
    <source>
        <dbReference type="WormBase" id="C49G7.11"/>
    </source>
</evidence>
<keyword id="KW-0963">Cytoplasm</keyword>
<keyword id="KW-0456">Lyase</keyword>
<keyword id="KW-1185">Reference proteome</keyword>
<proteinExistence type="evidence at protein level"/>
<accession>O16228</accession>
<feature type="chain" id="PRO_0000432109" description="Glutathione-independent glyoxalase DJR-1.2">
    <location>
        <begin position="1"/>
        <end position="186"/>
    </location>
</feature>
<feature type="active site" evidence="1">
    <location>
        <position position="20"/>
    </location>
</feature>
<feature type="active site" evidence="1">
    <location>
        <position position="105"/>
    </location>
</feature>
<feature type="active site" evidence="1">
    <location>
        <position position="124"/>
    </location>
</feature>
<protein>
    <recommendedName>
        <fullName evidence="4">Glutathione-independent glyoxalase DJR-1.2</fullName>
        <ecNumber evidence="2">4.2.1.130</ecNumber>
    </recommendedName>
    <alternativeName>
        <fullName>Protein DJ-1 homolog 2</fullName>
    </alternativeName>
</protein>
<name>DJ12_CAEEL</name>